<dbReference type="EC" id="6.2.1.1" evidence="1"/>
<dbReference type="EMBL" id="AL591688">
    <property type="protein sequence ID" value="CAC47906.1"/>
    <property type="molecule type" value="Genomic_DNA"/>
</dbReference>
<dbReference type="RefSeq" id="NP_387433.1">
    <property type="nucleotide sequence ID" value="NC_003047.1"/>
</dbReference>
<dbReference type="RefSeq" id="WP_010970576.1">
    <property type="nucleotide sequence ID" value="NC_003047.1"/>
</dbReference>
<dbReference type="SMR" id="Q92KX2"/>
<dbReference type="EnsemblBacteria" id="CAC47906">
    <property type="protein sequence ID" value="CAC47906"/>
    <property type="gene ID" value="SMc04093"/>
</dbReference>
<dbReference type="KEGG" id="sme:SMc04093"/>
<dbReference type="PATRIC" id="fig|266834.11.peg.4888"/>
<dbReference type="eggNOG" id="COG0365">
    <property type="taxonomic scope" value="Bacteria"/>
</dbReference>
<dbReference type="HOGENOM" id="CLU_000022_3_6_5"/>
<dbReference type="OrthoDB" id="9803968at2"/>
<dbReference type="Proteomes" id="UP000001976">
    <property type="component" value="Chromosome"/>
</dbReference>
<dbReference type="GO" id="GO:0005829">
    <property type="term" value="C:cytosol"/>
    <property type="evidence" value="ECO:0007669"/>
    <property type="project" value="TreeGrafter"/>
</dbReference>
<dbReference type="GO" id="GO:0003987">
    <property type="term" value="F:acetate-CoA ligase activity"/>
    <property type="evidence" value="ECO:0007669"/>
    <property type="project" value="UniProtKB-UniRule"/>
</dbReference>
<dbReference type="GO" id="GO:0016208">
    <property type="term" value="F:AMP binding"/>
    <property type="evidence" value="ECO:0007669"/>
    <property type="project" value="InterPro"/>
</dbReference>
<dbReference type="GO" id="GO:0005524">
    <property type="term" value="F:ATP binding"/>
    <property type="evidence" value="ECO:0007669"/>
    <property type="project" value="UniProtKB-KW"/>
</dbReference>
<dbReference type="GO" id="GO:0046872">
    <property type="term" value="F:metal ion binding"/>
    <property type="evidence" value="ECO:0007669"/>
    <property type="project" value="UniProtKB-KW"/>
</dbReference>
<dbReference type="GO" id="GO:0019427">
    <property type="term" value="P:acetyl-CoA biosynthetic process from acetate"/>
    <property type="evidence" value="ECO:0007669"/>
    <property type="project" value="InterPro"/>
</dbReference>
<dbReference type="CDD" id="cd05966">
    <property type="entry name" value="ACS"/>
    <property type="match status" value="1"/>
</dbReference>
<dbReference type="FunFam" id="3.30.300.30:FF:000004">
    <property type="entry name" value="Acetyl-coenzyme A synthetase"/>
    <property type="match status" value="1"/>
</dbReference>
<dbReference type="FunFam" id="3.40.50.12780:FF:000001">
    <property type="entry name" value="Acetyl-coenzyme A synthetase"/>
    <property type="match status" value="1"/>
</dbReference>
<dbReference type="Gene3D" id="3.30.300.30">
    <property type="match status" value="1"/>
</dbReference>
<dbReference type="Gene3D" id="3.40.50.12780">
    <property type="entry name" value="N-terminal domain of ligase-like"/>
    <property type="match status" value="1"/>
</dbReference>
<dbReference type="HAMAP" id="MF_01123">
    <property type="entry name" value="Ac_CoA_synth"/>
    <property type="match status" value="1"/>
</dbReference>
<dbReference type="InterPro" id="IPR011904">
    <property type="entry name" value="Ac_CoA_lig"/>
</dbReference>
<dbReference type="InterPro" id="IPR032387">
    <property type="entry name" value="ACAS_N"/>
</dbReference>
<dbReference type="InterPro" id="IPR025110">
    <property type="entry name" value="AMP-bd_C"/>
</dbReference>
<dbReference type="InterPro" id="IPR045851">
    <property type="entry name" value="AMP-bd_C_sf"/>
</dbReference>
<dbReference type="InterPro" id="IPR020845">
    <property type="entry name" value="AMP-binding_CS"/>
</dbReference>
<dbReference type="InterPro" id="IPR000873">
    <property type="entry name" value="AMP-dep_synth/lig_dom"/>
</dbReference>
<dbReference type="InterPro" id="IPR042099">
    <property type="entry name" value="ANL_N_sf"/>
</dbReference>
<dbReference type="NCBIfam" id="TIGR02188">
    <property type="entry name" value="Ac_CoA_lig_AcsA"/>
    <property type="match status" value="1"/>
</dbReference>
<dbReference type="NCBIfam" id="NF001208">
    <property type="entry name" value="PRK00174.1"/>
    <property type="match status" value="1"/>
</dbReference>
<dbReference type="PANTHER" id="PTHR24095">
    <property type="entry name" value="ACETYL-COENZYME A SYNTHETASE"/>
    <property type="match status" value="1"/>
</dbReference>
<dbReference type="PANTHER" id="PTHR24095:SF14">
    <property type="entry name" value="ACETYL-COENZYME A SYNTHETASE 1"/>
    <property type="match status" value="1"/>
</dbReference>
<dbReference type="Pfam" id="PF16177">
    <property type="entry name" value="ACAS_N"/>
    <property type="match status" value="1"/>
</dbReference>
<dbReference type="Pfam" id="PF00501">
    <property type="entry name" value="AMP-binding"/>
    <property type="match status" value="1"/>
</dbReference>
<dbReference type="Pfam" id="PF13193">
    <property type="entry name" value="AMP-binding_C"/>
    <property type="match status" value="1"/>
</dbReference>
<dbReference type="SUPFAM" id="SSF56801">
    <property type="entry name" value="Acetyl-CoA synthetase-like"/>
    <property type="match status" value="1"/>
</dbReference>
<dbReference type="PROSITE" id="PS00455">
    <property type="entry name" value="AMP_BINDING"/>
    <property type="match status" value="1"/>
</dbReference>
<gene>
    <name evidence="2" type="primary">acsA1</name>
    <name type="ordered locus">R03327</name>
    <name type="ORF">SMc04093</name>
</gene>
<accession>Q92KX2</accession>
<evidence type="ECO:0000255" key="1">
    <source>
        <dbReference type="HAMAP-Rule" id="MF_01123"/>
    </source>
</evidence>
<evidence type="ECO:0000312" key="2">
    <source>
        <dbReference type="EMBL" id="CAC47906.1"/>
    </source>
</evidence>
<organism>
    <name type="scientific">Rhizobium meliloti (strain 1021)</name>
    <name type="common">Ensifer meliloti</name>
    <name type="synonym">Sinorhizobium meliloti</name>
    <dbReference type="NCBI Taxonomy" id="266834"/>
    <lineage>
        <taxon>Bacteria</taxon>
        <taxon>Pseudomonadati</taxon>
        <taxon>Pseudomonadota</taxon>
        <taxon>Alphaproteobacteria</taxon>
        <taxon>Hyphomicrobiales</taxon>
        <taxon>Rhizobiaceae</taxon>
        <taxon>Sinorhizobium/Ensifer group</taxon>
        <taxon>Sinorhizobium</taxon>
    </lineage>
</organism>
<name>ACSA_RHIME</name>
<sequence length="649" mass="72022">MDVKTYPVLEAAKNRTLLDNATYLEWYRESVADPEKFWGEHGKRIEWFEPYTKVKNTSFEGDVSIKWFEDGLTNVSYNCIDRHLKTHGEKTAIIWEGDNPYLDKKITYNELYDKVCRLANVLKEQGVKKGDRVTIYMPMIPEAAYAMLACARIGAIHSVVFGGFSPEALAGRIVDCESTFVITCDEGVRGGKPVALKENTDTAIDIAARQHVTVSKVLVVRRTGGKVGWAPGRDLWYHQETAAAEPHCPPEKMNAEDPLFILYTSGSTGKPKGVLHTTGGYLVYASMTHQYVFDYQDGDIYWCTADVGWVTGHSYIVYGPLANAATTLMFEGVPNFPDAGRFWEVVDKHKVNIFYTAPTAIRSLMGAGDDFVKRSSRSSLRLLGTVGEPINPEAWEWYYHVVGDERCPVVDTWWQTETGGILITPLPGATDLKPGSATRPFFGVQPQIVDSDGKVVDGAADGNLCITDSWPGQMRTVYGDHERFIQTYFSTYKGKYFTGDGCRRDEDGYYWITGRVDDVLNVSGHRLGTAEVESALVSHNLVSEAAVVGYPHPIKGQGIYCYVSLMAGEVGDDELRQALVKHVRSEIGPIATPDKIQFAPGLPKTRSGKIMRRILRKIAEDDFGSLGDTSTLADPGVVDDLIANRQNRA</sequence>
<feature type="chain" id="PRO_0000208382" description="Acetyl-coenzyme A synthetase">
    <location>
        <begin position="1"/>
        <end position="649"/>
    </location>
</feature>
<feature type="binding site" evidence="1">
    <location>
        <begin position="189"/>
        <end position="192"/>
    </location>
    <ligand>
        <name>CoA</name>
        <dbReference type="ChEBI" id="CHEBI:57287"/>
    </ligand>
</feature>
<feature type="binding site" evidence="1">
    <location>
        <position position="311"/>
    </location>
    <ligand>
        <name>CoA</name>
        <dbReference type="ChEBI" id="CHEBI:57287"/>
    </ligand>
</feature>
<feature type="binding site" evidence="1">
    <location>
        <position position="335"/>
    </location>
    <ligand>
        <name>CoA</name>
        <dbReference type="ChEBI" id="CHEBI:57287"/>
    </ligand>
</feature>
<feature type="binding site" evidence="1">
    <location>
        <begin position="387"/>
        <end position="389"/>
    </location>
    <ligand>
        <name>ATP</name>
        <dbReference type="ChEBI" id="CHEBI:30616"/>
    </ligand>
</feature>
<feature type="binding site" evidence="1">
    <location>
        <begin position="411"/>
        <end position="416"/>
    </location>
    <ligand>
        <name>ATP</name>
        <dbReference type="ChEBI" id="CHEBI:30616"/>
    </ligand>
</feature>
<feature type="binding site" evidence="1">
    <location>
        <position position="500"/>
    </location>
    <ligand>
        <name>ATP</name>
        <dbReference type="ChEBI" id="CHEBI:30616"/>
    </ligand>
</feature>
<feature type="binding site" evidence="1">
    <location>
        <position position="515"/>
    </location>
    <ligand>
        <name>ATP</name>
        <dbReference type="ChEBI" id="CHEBI:30616"/>
    </ligand>
</feature>
<feature type="binding site" evidence="1">
    <location>
        <position position="523"/>
    </location>
    <ligand>
        <name>CoA</name>
        <dbReference type="ChEBI" id="CHEBI:57287"/>
    </ligand>
</feature>
<feature type="binding site" evidence="1">
    <location>
        <position position="526"/>
    </location>
    <ligand>
        <name>ATP</name>
        <dbReference type="ChEBI" id="CHEBI:30616"/>
    </ligand>
</feature>
<feature type="binding site" evidence="1">
    <location>
        <position position="537"/>
    </location>
    <ligand>
        <name>Mg(2+)</name>
        <dbReference type="ChEBI" id="CHEBI:18420"/>
    </ligand>
</feature>
<feature type="binding site" evidence="1">
    <location>
        <position position="539"/>
    </location>
    <ligand>
        <name>Mg(2+)</name>
        <dbReference type="ChEBI" id="CHEBI:18420"/>
    </ligand>
</feature>
<feature type="binding site" evidence="1">
    <location>
        <position position="542"/>
    </location>
    <ligand>
        <name>Mg(2+)</name>
        <dbReference type="ChEBI" id="CHEBI:18420"/>
    </ligand>
</feature>
<feature type="binding site" evidence="1">
    <location>
        <position position="584"/>
    </location>
    <ligand>
        <name>CoA</name>
        <dbReference type="ChEBI" id="CHEBI:57287"/>
    </ligand>
</feature>
<feature type="modified residue" description="N6-acetyllysine" evidence="1">
    <location>
        <position position="609"/>
    </location>
</feature>
<reference key="1">
    <citation type="journal article" date="2001" name="Proc. Natl. Acad. Sci. U.S.A.">
        <title>Analysis of the chromosome sequence of the legume symbiont Sinorhizobium meliloti strain 1021.</title>
        <authorList>
            <person name="Capela D."/>
            <person name="Barloy-Hubler F."/>
            <person name="Gouzy J."/>
            <person name="Bothe G."/>
            <person name="Ampe F."/>
            <person name="Batut J."/>
            <person name="Boistard P."/>
            <person name="Becker A."/>
            <person name="Boutry M."/>
            <person name="Cadieu E."/>
            <person name="Dreano S."/>
            <person name="Gloux S."/>
            <person name="Godrie T."/>
            <person name="Goffeau A."/>
            <person name="Kahn D."/>
            <person name="Kiss E."/>
            <person name="Lelaure V."/>
            <person name="Masuy D."/>
            <person name="Pohl T."/>
            <person name="Portetelle D."/>
            <person name="Puehler A."/>
            <person name="Purnelle B."/>
            <person name="Ramsperger U."/>
            <person name="Renard C."/>
            <person name="Thebault P."/>
            <person name="Vandenbol M."/>
            <person name="Weidner S."/>
            <person name="Galibert F."/>
        </authorList>
    </citation>
    <scope>NUCLEOTIDE SEQUENCE [LARGE SCALE GENOMIC DNA]</scope>
    <source>
        <strain>1021</strain>
    </source>
</reference>
<reference key="2">
    <citation type="journal article" date="2001" name="Science">
        <title>The composite genome of the legume symbiont Sinorhizobium meliloti.</title>
        <authorList>
            <person name="Galibert F."/>
            <person name="Finan T.M."/>
            <person name="Long S.R."/>
            <person name="Puehler A."/>
            <person name="Abola P."/>
            <person name="Ampe F."/>
            <person name="Barloy-Hubler F."/>
            <person name="Barnett M.J."/>
            <person name="Becker A."/>
            <person name="Boistard P."/>
            <person name="Bothe G."/>
            <person name="Boutry M."/>
            <person name="Bowser L."/>
            <person name="Buhrmester J."/>
            <person name="Cadieu E."/>
            <person name="Capela D."/>
            <person name="Chain P."/>
            <person name="Cowie A."/>
            <person name="Davis R.W."/>
            <person name="Dreano S."/>
            <person name="Federspiel N.A."/>
            <person name="Fisher R.F."/>
            <person name="Gloux S."/>
            <person name="Godrie T."/>
            <person name="Goffeau A."/>
            <person name="Golding B."/>
            <person name="Gouzy J."/>
            <person name="Gurjal M."/>
            <person name="Hernandez-Lucas I."/>
            <person name="Hong A."/>
            <person name="Huizar L."/>
            <person name="Hyman R.W."/>
            <person name="Jones T."/>
            <person name="Kahn D."/>
            <person name="Kahn M.L."/>
            <person name="Kalman S."/>
            <person name="Keating D.H."/>
            <person name="Kiss E."/>
            <person name="Komp C."/>
            <person name="Lelaure V."/>
            <person name="Masuy D."/>
            <person name="Palm C."/>
            <person name="Peck M.C."/>
            <person name="Pohl T.M."/>
            <person name="Portetelle D."/>
            <person name="Purnelle B."/>
            <person name="Ramsperger U."/>
            <person name="Surzycki R."/>
            <person name="Thebault P."/>
            <person name="Vandenbol M."/>
            <person name="Vorhoelter F.J."/>
            <person name="Weidner S."/>
            <person name="Wells D.H."/>
            <person name="Wong K."/>
            <person name="Yeh K.-C."/>
            <person name="Batut J."/>
        </authorList>
    </citation>
    <scope>NUCLEOTIDE SEQUENCE [LARGE SCALE GENOMIC DNA]</scope>
    <source>
        <strain>1021</strain>
    </source>
</reference>
<protein>
    <recommendedName>
        <fullName evidence="1">Acetyl-coenzyme A synthetase</fullName>
        <shortName evidence="1">AcCoA synthetase</shortName>
        <shortName evidence="1">Acs</shortName>
        <ecNumber evidence="1">6.2.1.1</ecNumber>
    </recommendedName>
    <alternativeName>
        <fullName evidence="1">Acetate--CoA ligase</fullName>
    </alternativeName>
    <alternativeName>
        <fullName evidence="1">Acyl-activating enzyme</fullName>
    </alternativeName>
</protein>
<comment type="function">
    <text evidence="1">Catalyzes the conversion of acetate into acetyl-CoA (AcCoA), an essential intermediate at the junction of anabolic and catabolic pathways. AcsA undergoes a two-step reaction. In the first half reaction, AcsA combines acetate with ATP to form acetyl-adenylate (AcAMP) intermediate. In the second half reaction, it can then transfer the acetyl group from AcAMP to the sulfhydryl group of CoA, forming the product AcCoA.</text>
</comment>
<comment type="catalytic activity">
    <reaction evidence="1">
        <text>acetate + ATP + CoA = acetyl-CoA + AMP + diphosphate</text>
        <dbReference type="Rhea" id="RHEA:23176"/>
        <dbReference type="ChEBI" id="CHEBI:30089"/>
        <dbReference type="ChEBI" id="CHEBI:30616"/>
        <dbReference type="ChEBI" id="CHEBI:33019"/>
        <dbReference type="ChEBI" id="CHEBI:57287"/>
        <dbReference type="ChEBI" id="CHEBI:57288"/>
        <dbReference type="ChEBI" id="CHEBI:456215"/>
        <dbReference type="EC" id="6.2.1.1"/>
    </reaction>
</comment>
<comment type="cofactor">
    <cofactor evidence="1">
        <name>Mg(2+)</name>
        <dbReference type="ChEBI" id="CHEBI:18420"/>
    </cofactor>
</comment>
<comment type="PTM">
    <text evidence="1">Acetylated. Deacetylation by the SIR2-homolog deacetylase activates the enzyme.</text>
</comment>
<comment type="similarity">
    <text evidence="1">Belongs to the ATP-dependent AMP-binding enzyme family.</text>
</comment>
<proteinExistence type="inferred from homology"/>
<keyword id="KW-0007">Acetylation</keyword>
<keyword id="KW-0067">ATP-binding</keyword>
<keyword id="KW-0436">Ligase</keyword>
<keyword id="KW-0460">Magnesium</keyword>
<keyword id="KW-0479">Metal-binding</keyword>
<keyword id="KW-0547">Nucleotide-binding</keyword>
<keyword id="KW-1185">Reference proteome</keyword>